<name>GCSPA_COXB1</name>
<accession>B6J4T7</accession>
<sequence length="446" mass="48465">MPFIPHTPDDIEKMLAVIGAESIDQLFDEIPSALANIQQVPPGLNEAGITRLMEKREPNKQLCFIGAGAYEHHIPAAVWEIATRGEFYTAYTPYQAEASQGSLQLIYEYQTMMAELMAMDVSNASLYDGASALAEAALMAVRIKRGKAQRILVPASVNPFYRKVLSSIVEQQKINVEIIPFDPTMGIVNSELLKAKNAEGAAAIIIPQPNFFGCLEAVDVLTDWAHANDLLVIASVNPTAMALLKPPGQWGQKGADIVCGEGQPLGVPLASGGPYFGFMCCKKDYVRQLPGRIVGRTVDKKGREGFTLTLQAREQHIRRSKATSNICTNQGLAVVAATIYLSLLGATGLREVALASHTQSRDLFQRLSAVKGVSPVFSSPIFHEFVVRLEKPVEEVLAAMAEQGIQAGFSLKNDYPKLGNGLLICVTDTKTDDDLMAYENALRSIQ</sequence>
<organism>
    <name type="scientific">Coxiella burnetii (strain CbuK_Q154)</name>
    <name type="common">Coxiella burnetii (strain Q154)</name>
    <dbReference type="NCBI Taxonomy" id="434924"/>
    <lineage>
        <taxon>Bacteria</taxon>
        <taxon>Pseudomonadati</taxon>
        <taxon>Pseudomonadota</taxon>
        <taxon>Gammaproteobacteria</taxon>
        <taxon>Legionellales</taxon>
        <taxon>Coxiellaceae</taxon>
        <taxon>Coxiella</taxon>
    </lineage>
</organism>
<proteinExistence type="inferred from homology"/>
<reference key="1">
    <citation type="journal article" date="2009" name="Infect. Immun.">
        <title>Comparative genomics reveal extensive transposon-mediated genomic plasticity and diversity among potential effector proteins within the genus Coxiella.</title>
        <authorList>
            <person name="Beare P.A."/>
            <person name="Unsworth N."/>
            <person name="Andoh M."/>
            <person name="Voth D.E."/>
            <person name="Omsland A."/>
            <person name="Gilk S.D."/>
            <person name="Williams K.P."/>
            <person name="Sobral B.W."/>
            <person name="Kupko J.J. III"/>
            <person name="Porcella S.F."/>
            <person name="Samuel J.E."/>
            <person name="Heinzen R.A."/>
        </authorList>
    </citation>
    <scope>NUCLEOTIDE SEQUENCE [LARGE SCALE GENOMIC DNA]</scope>
    <source>
        <strain>CbuK_Q154</strain>
    </source>
</reference>
<evidence type="ECO:0000255" key="1">
    <source>
        <dbReference type="HAMAP-Rule" id="MF_00712"/>
    </source>
</evidence>
<dbReference type="EC" id="1.4.4.2" evidence="1"/>
<dbReference type="EMBL" id="CP001020">
    <property type="protein sequence ID" value="ACJ19602.1"/>
    <property type="molecule type" value="Genomic_DNA"/>
</dbReference>
<dbReference type="RefSeq" id="WP_005770511.1">
    <property type="nucleotide sequence ID" value="NC_011528.1"/>
</dbReference>
<dbReference type="SMR" id="B6J4T7"/>
<dbReference type="KEGG" id="cbc:CbuK_0294"/>
<dbReference type="HOGENOM" id="CLU_004620_0_2_6"/>
<dbReference type="GO" id="GO:0004375">
    <property type="term" value="F:glycine dehydrogenase (decarboxylating) activity"/>
    <property type="evidence" value="ECO:0007669"/>
    <property type="project" value="UniProtKB-EC"/>
</dbReference>
<dbReference type="GO" id="GO:0019464">
    <property type="term" value="P:glycine decarboxylation via glycine cleavage system"/>
    <property type="evidence" value="ECO:0007669"/>
    <property type="project" value="UniProtKB-UniRule"/>
</dbReference>
<dbReference type="GO" id="GO:0009116">
    <property type="term" value="P:nucleoside metabolic process"/>
    <property type="evidence" value="ECO:0007669"/>
    <property type="project" value="InterPro"/>
</dbReference>
<dbReference type="CDD" id="cd00613">
    <property type="entry name" value="GDC-P"/>
    <property type="match status" value="1"/>
</dbReference>
<dbReference type="FunFam" id="3.40.640.10:FF:000113">
    <property type="entry name" value="Probable glycine dehydrogenase (decarboxylating) subunit 1"/>
    <property type="match status" value="1"/>
</dbReference>
<dbReference type="Gene3D" id="3.90.1150.10">
    <property type="entry name" value="Aspartate Aminotransferase, domain 1"/>
    <property type="match status" value="1"/>
</dbReference>
<dbReference type="Gene3D" id="3.40.640.10">
    <property type="entry name" value="Type I PLP-dependent aspartate aminotransferase-like (Major domain)"/>
    <property type="match status" value="1"/>
</dbReference>
<dbReference type="HAMAP" id="MF_00712">
    <property type="entry name" value="GcvPA"/>
    <property type="match status" value="1"/>
</dbReference>
<dbReference type="InterPro" id="IPR023010">
    <property type="entry name" value="GcvPA"/>
</dbReference>
<dbReference type="InterPro" id="IPR049315">
    <property type="entry name" value="GDC-P_N"/>
</dbReference>
<dbReference type="InterPro" id="IPR020581">
    <property type="entry name" value="GDC_P"/>
</dbReference>
<dbReference type="InterPro" id="IPR015424">
    <property type="entry name" value="PyrdxlP-dep_Trfase"/>
</dbReference>
<dbReference type="InterPro" id="IPR015421">
    <property type="entry name" value="PyrdxlP-dep_Trfase_major"/>
</dbReference>
<dbReference type="InterPro" id="IPR015422">
    <property type="entry name" value="PyrdxlP-dep_Trfase_small"/>
</dbReference>
<dbReference type="NCBIfam" id="NF001696">
    <property type="entry name" value="PRK00451.1"/>
    <property type="match status" value="1"/>
</dbReference>
<dbReference type="PANTHER" id="PTHR42806">
    <property type="entry name" value="GLYCINE CLEAVAGE SYSTEM P-PROTEIN"/>
    <property type="match status" value="1"/>
</dbReference>
<dbReference type="PANTHER" id="PTHR42806:SF1">
    <property type="entry name" value="GLYCINE DEHYDROGENASE (DECARBOXYLATING)"/>
    <property type="match status" value="1"/>
</dbReference>
<dbReference type="Pfam" id="PF02347">
    <property type="entry name" value="GDC-P"/>
    <property type="match status" value="1"/>
</dbReference>
<dbReference type="PIRSF" id="PIRSF006815">
    <property type="entry name" value="GcvPA"/>
    <property type="match status" value="1"/>
</dbReference>
<dbReference type="SUPFAM" id="SSF53383">
    <property type="entry name" value="PLP-dependent transferases"/>
    <property type="match status" value="1"/>
</dbReference>
<comment type="function">
    <text evidence="1">The glycine cleavage system catalyzes the degradation of glycine. The P protein binds the alpha-amino group of glycine through its pyridoxal phosphate cofactor; CO(2) is released and the remaining methylamine moiety is then transferred to the lipoamide cofactor of the H protein.</text>
</comment>
<comment type="catalytic activity">
    <reaction evidence="1">
        <text>N(6)-[(R)-lipoyl]-L-lysyl-[glycine-cleavage complex H protein] + glycine + H(+) = N(6)-[(R)-S(8)-aminomethyldihydrolipoyl]-L-lysyl-[glycine-cleavage complex H protein] + CO2</text>
        <dbReference type="Rhea" id="RHEA:24304"/>
        <dbReference type="Rhea" id="RHEA-COMP:10494"/>
        <dbReference type="Rhea" id="RHEA-COMP:10495"/>
        <dbReference type="ChEBI" id="CHEBI:15378"/>
        <dbReference type="ChEBI" id="CHEBI:16526"/>
        <dbReference type="ChEBI" id="CHEBI:57305"/>
        <dbReference type="ChEBI" id="CHEBI:83099"/>
        <dbReference type="ChEBI" id="CHEBI:83143"/>
        <dbReference type="EC" id="1.4.4.2"/>
    </reaction>
</comment>
<comment type="subunit">
    <text evidence="1">The glycine cleavage system is composed of four proteins: P, T, L and H. In this organism, the P 'protein' is a heterodimer of two subunits.</text>
</comment>
<comment type="similarity">
    <text evidence="1">Belongs to the GcvP family. N-terminal subunit subfamily.</text>
</comment>
<protein>
    <recommendedName>
        <fullName evidence="1">Probable glycine dehydrogenase (decarboxylating) subunit 1</fullName>
        <ecNumber evidence="1">1.4.4.2</ecNumber>
    </recommendedName>
    <alternativeName>
        <fullName evidence="1">Glycine cleavage system P-protein subunit 1</fullName>
    </alternativeName>
    <alternativeName>
        <fullName evidence="1">Glycine decarboxylase subunit 1</fullName>
    </alternativeName>
    <alternativeName>
        <fullName evidence="1">Glycine dehydrogenase (aminomethyl-transferring) subunit 1</fullName>
    </alternativeName>
</protein>
<feature type="chain" id="PRO_1000132476" description="Probable glycine dehydrogenase (decarboxylating) subunit 1">
    <location>
        <begin position="1"/>
        <end position="446"/>
    </location>
</feature>
<gene>
    <name evidence="1" type="primary">gcvPA</name>
    <name type="ordered locus">CbuK_0294</name>
</gene>
<keyword id="KW-0560">Oxidoreductase</keyword>